<comment type="function">
    <text evidence="1 2">Adapter protein which non-covalently associates with activating receptors found on the surface of a variety of immune cells to mediate signaling and cell activation following ligand binding by the receptors (By similarity). TYROBP is tyrosine-phosphorylated in the ITAM domain following ligand binding by the associated receptors which leads to activation of additional tyrosine kinases and subsequent cell activation (By similarity). Also has an inhibitory role in some cells (By similarity). Non-covalently associates with activating receptors of the CD300 family to mediate cell activation (By similarity). Also mediates cell activation through association with activating receptors of the CD200R family (By similarity). Required for neutrophil activation mediated by integrin (By similarity). Required for the activation of myeloid cells mediated by the CLEC5A/MDL1 receptor (By similarity). Associates with natural killer (NK) cell receptors such as the KLRD1/KLRC2 heterodimer to mediate NK cell activation (By similarity). Associates with TREM1 to mediate activation of neutrophils and monocytes (By similarity). Associates with TREM2 on monocyte-derived dendritic cells to mediate up-regulation of chemokine receptor CCR7 and dendritic cell maturation and survival (By similarity). Association with TREM2 mediates cytokine-induced formation of multinucleated giant cells which are formed by the fusion of macrophages (By similarity). Stabilizes the TREM2 C-terminal fragment (TREM2-CTF) produced by TREM2 ectodomain shedding which suppresses the release of pro-inflammatory cytokines (By similarity). In microglia, required with TREM2 for phagocytosis of apoptotic neurons (By similarity). Required with ITGAM/CD11B in microglia to control production of microglial superoxide ions which promote the neuronal apoptosis that occurs during brain development (By similarity). Promotes pro-inflammatory responses in microglia following nerve injury which accelerates degeneration of injured neurons (By similarity). Positively regulates the expression of the IRAK3/IRAK-M kinase and IL10 production by liver dendritic cells and inhibits their T cell allosimulatory ability (By similarity). Negatively regulates B cell proliferation (By similarity). Required for CSF1-mediated osteoclast cytoskeletal organization (By similarity). Positively regulates multinucleation during osteoclast development (By similarity).</text>
</comment>
<comment type="subunit">
    <text evidence="1 2">Homodimer; disulfide-linked (By similarity). Homotrimer; disulfide-linked (By similarity). Homotetramer; disulfide-linked (By similarity). Homotrimers and homotetramers form when low levels of partner receptors are available and is competitive with assembly with interacting receptors (By similarity). They may represent alternative oligomerization states or may be intermediates in the receptor assembly process (By similarity). Binding of a metal cation aids in homooligomerization through coordination of the metal ion by the subunits of the oligomer (By similarity). Interacts with TREM1 (By similarity). Interacts with TREM2 (By similarity). Interacts with CLECSF5 (By similarity). Interacts with CD300LB and CD300C2 (By similarity). Interacts with CD300E (By similarity). Interacts (via ITAM domain) with SYK (via SH2 domains); activates SYK mediating neutrophils and macrophages integrin-mediated activation (By similarity). Interacts with KLRC2 (By similarity). Interacts with CD300H (By similarity). Interacts with KLRD1 (By similarity). Interacts with SIGLEC1 (By similarity).</text>
</comment>
<comment type="subcellular location">
    <subcellularLocation>
        <location evidence="1">Cell membrane</location>
        <topology evidence="3">Single-pass type I membrane protein</topology>
    </subcellularLocation>
</comment>
<comment type="PTM">
    <text evidence="1">Following ligand binding by associated receptors, tyrosine phosphorylated in the ITAM domain which leads to activation of additional tyrosine kinases and subsequent cell activation.</text>
</comment>
<comment type="similarity">
    <text evidence="5">Belongs to the TYROBP family.</text>
</comment>
<organism>
    <name type="scientific">Bos taurus</name>
    <name type="common">Bovine</name>
    <dbReference type="NCBI Taxonomy" id="9913"/>
    <lineage>
        <taxon>Eukaryota</taxon>
        <taxon>Metazoa</taxon>
        <taxon>Chordata</taxon>
        <taxon>Craniata</taxon>
        <taxon>Vertebrata</taxon>
        <taxon>Euteleostomi</taxon>
        <taxon>Mammalia</taxon>
        <taxon>Eutheria</taxon>
        <taxon>Laurasiatheria</taxon>
        <taxon>Artiodactyla</taxon>
        <taxon>Ruminantia</taxon>
        <taxon>Pecora</taxon>
        <taxon>Bovidae</taxon>
        <taxon>Bovinae</taxon>
        <taxon>Bos</taxon>
    </lineage>
</organism>
<keyword id="KW-0106">Calcium</keyword>
<keyword id="KW-1003">Cell membrane</keyword>
<keyword id="KW-1015">Disulfide bond</keyword>
<keyword id="KW-0391">Immunity</keyword>
<keyword id="KW-0472">Membrane</keyword>
<keyword id="KW-0479">Metal-binding</keyword>
<keyword id="KW-0597">Phosphoprotein</keyword>
<keyword id="KW-1185">Reference proteome</keyword>
<keyword id="KW-0732">Signal</keyword>
<keyword id="KW-0812">Transmembrane</keyword>
<keyword id="KW-1133">Transmembrane helix</keyword>
<evidence type="ECO:0000250" key="1">
    <source>
        <dbReference type="UniProtKB" id="O43914"/>
    </source>
</evidence>
<evidence type="ECO:0000250" key="2">
    <source>
        <dbReference type="UniProtKB" id="O54885"/>
    </source>
</evidence>
<evidence type="ECO:0000255" key="3"/>
<evidence type="ECO:0000256" key="4">
    <source>
        <dbReference type="SAM" id="MobiDB-lite"/>
    </source>
</evidence>
<evidence type="ECO:0000305" key="5"/>
<proteinExistence type="inferred from homology"/>
<feature type="signal peptide" evidence="3">
    <location>
        <begin position="1"/>
        <end position="25"/>
    </location>
</feature>
<feature type="chain" id="PRO_0000022602" description="TYRO protein tyrosine kinase-binding protein">
    <location>
        <begin position="26"/>
        <end position="108"/>
    </location>
</feature>
<feature type="topological domain" description="Extracellular" evidence="1">
    <location>
        <begin position="26"/>
        <end position="36"/>
    </location>
</feature>
<feature type="transmembrane region" description="Helical" evidence="1">
    <location>
        <begin position="37"/>
        <end position="57"/>
    </location>
</feature>
<feature type="topological domain" description="Cytoplasmic" evidence="1">
    <location>
        <begin position="58"/>
        <end position="108"/>
    </location>
</feature>
<feature type="domain" description="ITAM">
    <location>
        <begin position="75"/>
        <end position="103"/>
    </location>
</feature>
<feature type="region of interest" description="Disordered" evidence="4">
    <location>
        <begin position="71"/>
        <end position="108"/>
    </location>
</feature>
<feature type="compositionally biased region" description="Polar residues" evidence="4">
    <location>
        <begin position="84"/>
        <end position="108"/>
    </location>
</feature>
<feature type="binding site" evidence="1">
    <location>
        <position position="46"/>
    </location>
    <ligand>
        <name>Ca(2+)</name>
        <dbReference type="ChEBI" id="CHEBI:29108"/>
        <note>ligand shared between two neighboring subunits in homooligomer</note>
    </ligand>
</feature>
<feature type="site" description="Important for interaction with transmembrane receptors" evidence="1">
    <location>
        <position position="50"/>
    </location>
</feature>
<feature type="modified residue" description="Phosphotyrosine" evidence="2">
    <location>
        <position position="86"/>
    </location>
</feature>
<feature type="modified residue" description="Phosphotyrosine" evidence="2">
    <location>
        <position position="97"/>
    </location>
</feature>
<feature type="disulfide bond" description="Interchain" evidence="1">
    <location>
        <position position="31"/>
    </location>
</feature>
<protein>
    <recommendedName>
        <fullName evidence="1">TYRO protein tyrosine kinase-binding protein</fullName>
    </recommendedName>
    <alternativeName>
        <fullName evidence="1">DNAX-activation protein 12</fullName>
    </alternativeName>
</protein>
<dbReference type="EMBL" id="AJ419227">
    <property type="protein sequence ID" value="CAD11669.1"/>
    <property type="molecule type" value="mRNA"/>
</dbReference>
<dbReference type="EMBL" id="BC126797">
    <property type="protein sequence ID" value="AAI26798.1"/>
    <property type="molecule type" value="mRNA"/>
</dbReference>
<dbReference type="RefSeq" id="XP_005218963.1">
    <property type="nucleotide sequence ID" value="XM_005218906.3"/>
</dbReference>
<dbReference type="SMR" id="Q95J79"/>
<dbReference type="FunCoup" id="Q95J79">
    <property type="interactions" value="477"/>
</dbReference>
<dbReference type="STRING" id="9913.ENSBTAP00000070392"/>
<dbReference type="PaxDb" id="9913-ENSBTAP00000009652"/>
<dbReference type="PeptideAtlas" id="Q95J79"/>
<dbReference type="GeneID" id="282390"/>
<dbReference type="CTD" id="7305"/>
<dbReference type="eggNOG" id="ENOG502SCVI">
    <property type="taxonomic scope" value="Eukaryota"/>
</dbReference>
<dbReference type="HOGENOM" id="CLU_141718_0_0_1"/>
<dbReference type="InParanoid" id="Q95J79"/>
<dbReference type="OrthoDB" id="9901873at2759"/>
<dbReference type="Proteomes" id="UP000009136">
    <property type="component" value="Unplaced"/>
</dbReference>
<dbReference type="GO" id="GO:0009986">
    <property type="term" value="C:cell surface"/>
    <property type="evidence" value="ECO:0000250"/>
    <property type="project" value="UniProtKB"/>
</dbReference>
<dbReference type="GO" id="GO:0005886">
    <property type="term" value="C:plasma membrane"/>
    <property type="evidence" value="ECO:0000250"/>
    <property type="project" value="UniProtKB"/>
</dbReference>
<dbReference type="GO" id="GO:0046872">
    <property type="term" value="F:metal ion binding"/>
    <property type="evidence" value="ECO:0007669"/>
    <property type="project" value="UniProtKB-KW"/>
</dbReference>
<dbReference type="GO" id="GO:0042803">
    <property type="term" value="F:protein homodimerization activity"/>
    <property type="evidence" value="ECO:0000250"/>
    <property type="project" value="UniProtKB"/>
</dbReference>
<dbReference type="GO" id="GO:0005102">
    <property type="term" value="F:signaling receptor binding"/>
    <property type="evidence" value="ECO:0000318"/>
    <property type="project" value="GO_Central"/>
</dbReference>
<dbReference type="GO" id="GO:0043277">
    <property type="term" value="P:apoptotic cell clearance"/>
    <property type="evidence" value="ECO:0000250"/>
    <property type="project" value="UniProtKB"/>
</dbReference>
<dbReference type="GO" id="GO:0002282">
    <property type="term" value="P:microglial cell activation involved in immune response"/>
    <property type="evidence" value="ECO:0000318"/>
    <property type="project" value="GO_Central"/>
</dbReference>
<dbReference type="GO" id="GO:0030889">
    <property type="term" value="P:negative regulation of B cell proliferation"/>
    <property type="evidence" value="ECO:0000318"/>
    <property type="project" value="GO_Central"/>
</dbReference>
<dbReference type="GO" id="GO:0032911">
    <property type="term" value="P:negative regulation of transforming growth factor beta1 production"/>
    <property type="evidence" value="ECO:0000318"/>
    <property type="project" value="GO_Central"/>
</dbReference>
<dbReference type="GO" id="GO:0002283">
    <property type="term" value="P:neutrophil activation involved in immune response"/>
    <property type="evidence" value="ECO:0000318"/>
    <property type="project" value="GO_Central"/>
</dbReference>
<dbReference type="GO" id="GO:0034241">
    <property type="term" value="P:positive regulation of macrophage fusion"/>
    <property type="evidence" value="ECO:0000318"/>
    <property type="project" value="GO_Central"/>
</dbReference>
<dbReference type="GO" id="GO:1904151">
    <property type="term" value="P:positive regulation of microglial cell mediated cytotoxicity"/>
    <property type="evidence" value="ECO:0000318"/>
    <property type="project" value="GO_Central"/>
</dbReference>
<dbReference type="GO" id="GO:0032816">
    <property type="term" value="P:positive regulation of natural killer cell activation"/>
    <property type="evidence" value="ECO:0000318"/>
    <property type="project" value="GO_Central"/>
</dbReference>
<dbReference type="GO" id="GO:0071526">
    <property type="term" value="P:semaphorin-plexin signaling pathway"/>
    <property type="evidence" value="ECO:0000250"/>
    <property type="project" value="UniProtKB"/>
</dbReference>
<dbReference type="GO" id="GO:0002223">
    <property type="term" value="P:stimulatory C-type lectin receptor signaling pathway"/>
    <property type="evidence" value="ECO:0000250"/>
    <property type="project" value="UniProtKB"/>
</dbReference>
<dbReference type="GO" id="GO:0002222">
    <property type="term" value="P:stimulatory killer cell immunoglobulin-like receptor signaling pathway"/>
    <property type="evidence" value="ECO:0000250"/>
    <property type="project" value="UniProtKB"/>
</dbReference>
<dbReference type="GO" id="GO:0002291">
    <property type="term" value="P:T cell activation via T cell receptor contact with antigen bound to MHC molecule on antigen presenting cell"/>
    <property type="evidence" value="ECO:0000250"/>
    <property type="project" value="UniProtKB"/>
</dbReference>
<dbReference type="FunFam" id="1.10.287.770:FF:000004">
    <property type="entry name" value="TYRO protein tyrosine kinase-binding protein"/>
    <property type="match status" value="1"/>
</dbReference>
<dbReference type="Gene3D" id="1.10.287.770">
    <property type="entry name" value="YojJ-like"/>
    <property type="match status" value="1"/>
</dbReference>
<dbReference type="InterPro" id="IPR026200">
    <property type="entry name" value="Tyrobp"/>
</dbReference>
<dbReference type="PANTHER" id="PTHR17554">
    <property type="entry name" value="TYRO PROTEIN TYROSINE KINASE-BINDING PROTEIN"/>
    <property type="match status" value="1"/>
</dbReference>
<dbReference type="PANTHER" id="PTHR17554:SF2">
    <property type="entry name" value="TYRO PROTEIN TYROSINE KINASE-BINDING PROTEIN"/>
    <property type="match status" value="1"/>
</dbReference>
<sequence length="108" mass="11836">MEGLRPSDRLLSLLLTVGGLSLVLAQSECNCSSVSPGVLAGIVLGDLMLTLLIALAVYYLGRLVPRGRGATEVTRKQHIPETESPYQELQGQRTDVYSDLNTQRPYYK</sequence>
<name>TYOBP_BOVIN</name>
<gene>
    <name evidence="1" type="primary">TYROBP</name>
    <name evidence="1" type="synonym">DAP12</name>
</gene>
<accession>Q95J79</accession>
<accession>A0JNM8</accession>
<reference key="1">
    <citation type="submission" date="2001-11" db="EMBL/GenBank/DDBJ databases">
        <title>Immunoreceptor DAP12: alternative splicing generates 2 transcripts in cattle, pig and human.</title>
        <authorList>
            <person name="Ellis S.A."/>
            <person name="Staines K.A."/>
        </authorList>
    </citation>
    <scope>NUCLEOTIDE SEQUENCE [MRNA]</scope>
    <source>
        <strain>Friesian</strain>
        <tissue>Peripheral blood</tissue>
    </source>
</reference>
<reference key="2">
    <citation type="submission" date="2006-10" db="EMBL/GenBank/DDBJ databases">
        <authorList>
            <consortium name="NIH - Mammalian Gene Collection (MGC) project"/>
        </authorList>
    </citation>
    <scope>NUCLEOTIDE SEQUENCE [LARGE SCALE MRNA]</scope>
    <source>
        <strain>Hereford</strain>
        <tissue>Fetal medulla</tissue>
    </source>
</reference>